<evidence type="ECO:0000255" key="1">
    <source>
        <dbReference type="HAMAP-Rule" id="MF_00060"/>
    </source>
</evidence>
<sequence>MNKRAAIQRAKIKMKILLSNDDGVYAQGIHALADALRDLAEIVIVAPDRNRSGASNSLTLEHPLRVSQIAENTYSVQGTPTDCVHFALNELMKDALPDLVLSGINHGANLGDDVLYSGTVAAAMEGHFLGVQSIAFSLAGTTHFASAAHFVRQLVEQHLANPIPTNRLLNVNIPDRPLELIQGIEVTRLGARHHAESMIKQKDPRGHDIYWLGPPGKEQDAGPGTDFHAIERGWVSLTPLQVDLTAHESLRSMDHWLKEKVNG</sequence>
<keyword id="KW-0963">Cytoplasm</keyword>
<keyword id="KW-0378">Hydrolase</keyword>
<keyword id="KW-0479">Metal-binding</keyword>
<keyword id="KW-0547">Nucleotide-binding</keyword>
<proteinExistence type="inferred from homology"/>
<organism>
    <name type="scientific">Vibrio cholerae serotype O1 (strain ATCC 39541 / Classical Ogawa 395 / O395)</name>
    <dbReference type="NCBI Taxonomy" id="345073"/>
    <lineage>
        <taxon>Bacteria</taxon>
        <taxon>Pseudomonadati</taxon>
        <taxon>Pseudomonadota</taxon>
        <taxon>Gammaproteobacteria</taxon>
        <taxon>Vibrionales</taxon>
        <taxon>Vibrionaceae</taxon>
        <taxon>Vibrio</taxon>
    </lineage>
</organism>
<name>SURE_VIBC3</name>
<comment type="function">
    <text evidence="1">Nucleotidase that shows phosphatase activity on nucleoside 5'-monophosphates.</text>
</comment>
<comment type="catalytic activity">
    <reaction evidence="1">
        <text>a ribonucleoside 5'-phosphate + H2O = a ribonucleoside + phosphate</text>
        <dbReference type="Rhea" id="RHEA:12484"/>
        <dbReference type="ChEBI" id="CHEBI:15377"/>
        <dbReference type="ChEBI" id="CHEBI:18254"/>
        <dbReference type="ChEBI" id="CHEBI:43474"/>
        <dbReference type="ChEBI" id="CHEBI:58043"/>
        <dbReference type="EC" id="3.1.3.5"/>
    </reaction>
</comment>
<comment type="cofactor">
    <cofactor evidence="1">
        <name>a divalent metal cation</name>
        <dbReference type="ChEBI" id="CHEBI:60240"/>
    </cofactor>
    <text evidence="1">Binds 1 divalent metal cation per subunit.</text>
</comment>
<comment type="subcellular location">
    <subcellularLocation>
        <location evidence="1">Cytoplasm</location>
    </subcellularLocation>
</comment>
<comment type="similarity">
    <text evidence="1">Belongs to the SurE nucleotidase family.</text>
</comment>
<accession>A5F9D9</accession>
<accession>C3LX57</accession>
<dbReference type="EC" id="3.1.3.5" evidence="1"/>
<dbReference type="EMBL" id="CP000627">
    <property type="protein sequence ID" value="ABQ20849.1"/>
    <property type="molecule type" value="Genomic_DNA"/>
</dbReference>
<dbReference type="EMBL" id="CP001235">
    <property type="protein sequence ID" value="ACP08567.1"/>
    <property type="molecule type" value="Genomic_DNA"/>
</dbReference>
<dbReference type="SMR" id="A5F9D9"/>
<dbReference type="KEGG" id="vco:VC0395_A0059"/>
<dbReference type="KEGG" id="vcr:VC395_0548"/>
<dbReference type="PATRIC" id="fig|345073.21.peg.538"/>
<dbReference type="eggNOG" id="COG0496">
    <property type="taxonomic scope" value="Bacteria"/>
</dbReference>
<dbReference type="HOGENOM" id="CLU_045192_1_2_6"/>
<dbReference type="OrthoDB" id="9780815at2"/>
<dbReference type="Proteomes" id="UP000000249">
    <property type="component" value="Chromosome 2"/>
</dbReference>
<dbReference type="GO" id="GO:0005737">
    <property type="term" value="C:cytoplasm"/>
    <property type="evidence" value="ECO:0007669"/>
    <property type="project" value="UniProtKB-SubCell"/>
</dbReference>
<dbReference type="GO" id="GO:0008254">
    <property type="term" value="F:3'-nucleotidase activity"/>
    <property type="evidence" value="ECO:0007669"/>
    <property type="project" value="TreeGrafter"/>
</dbReference>
<dbReference type="GO" id="GO:0008253">
    <property type="term" value="F:5'-nucleotidase activity"/>
    <property type="evidence" value="ECO:0007669"/>
    <property type="project" value="UniProtKB-UniRule"/>
</dbReference>
<dbReference type="GO" id="GO:0004309">
    <property type="term" value="F:exopolyphosphatase activity"/>
    <property type="evidence" value="ECO:0007669"/>
    <property type="project" value="TreeGrafter"/>
</dbReference>
<dbReference type="GO" id="GO:0046872">
    <property type="term" value="F:metal ion binding"/>
    <property type="evidence" value="ECO:0007669"/>
    <property type="project" value="UniProtKB-UniRule"/>
</dbReference>
<dbReference type="GO" id="GO:0000166">
    <property type="term" value="F:nucleotide binding"/>
    <property type="evidence" value="ECO:0007669"/>
    <property type="project" value="UniProtKB-KW"/>
</dbReference>
<dbReference type="FunFam" id="3.40.1210.10:FF:000001">
    <property type="entry name" value="5'/3'-nucleotidase SurE"/>
    <property type="match status" value="1"/>
</dbReference>
<dbReference type="Gene3D" id="3.40.1210.10">
    <property type="entry name" value="Survival protein SurE-like phosphatase/nucleotidase"/>
    <property type="match status" value="1"/>
</dbReference>
<dbReference type="HAMAP" id="MF_00060">
    <property type="entry name" value="SurE"/>
    <property type="match status" value="1"/>
</dbReference>
<dbReference type="InterPro" id="IPR030048">
    <property type="entry name" value="SurE"/>
</dbReference>
<dbReference type="InterPro" id="IPR002828">
    <property type="entry name" value="SurE-like_Pase/nucleotidase"/>
</dbReference>
<dbReference type="InterPro" id="IPR036523">
    <property type="entry name" value="SurE-like_sf"/>
</dbReference>
<dbReference type="NCBIfam" id="NF001489">
    <property type="entry name" value="PRK00346.1-3"/>
    <property type="match status" value="1"/>
</dbReference>
<dbReference type="NCBIfam" id="NF001490">
    <property type="entry name" value="PRK00346.1-4"/>
    <property type="match status" value="1"/>
</dbReference>
<dbReference type="NCBIfam" id="TIGR00087">
    <property type="entry name" value="surE"/>
    <property type="match status" value="1"/>
</dbReference>
<dbReference type="PANTHER" id="PTHR30457">
    <property type="entry name" value="5'-NUCLEOTIDASE SURE"/>
    <property type="match status" value="1"/>
</dbReference>
<dbReference type="PANTHER" id="PTHR30457:SF12">
    <property type="entry name" value="5'_3'-NUCLEOTIDASE SURE"/>
    <property type="match status" value="1"/>
</dbReference>
<dbReference type="Pfam" id="PF01975">
    <property type="entry name" value="SurE"/>
    <property type="match status" value="1"/>
</dbReference>
<dbReference type="SUPFAM" id="SSF64167">
    <property type="entry name" value="SurE-like"/>
    <property type="match status" value="1"/>
</dbReference>
<protein>
    <recommendedName>
        <fullName evidence="1">5'-nucleotidase SurE</fullName>
        <ecNumber evidence="1">3.1.3.5</ecNumber>
    </recommendedName>
    <alternativeName>
        <fullName evidence="1">Nucleoside 5'-monophosphate phosphohydrolase</fullName>
    </alternativeName>
</protein>
<feature type="chain" id="PRO_0000335289" description="5'-nucleotidase SurE">
    <location>
        <begin position="1"/>
        <end position="263"/>
    </location>
</feature>
<feature type="binding site" evidence="1">
    <location>
        <position position="21"/>
    </location>
    <ligand>
        <name>a divalent metal cation</name>
        <dbReference type="ChEBI" id="CHEBI:60240"/>
    </ligand>
</feature>
<feature type="binding site" evidence="1">
    <location>
        <position position="22"/>
    </location>
    <ligand>
        <name>a divalent metal cation</name>
        <dbReference type="ChEBI" id="CHEBI:60240"/>
    </ligand>
</feature>
<feature type="binding site" evidence="1">
    <location>
        <position position="52"/>
    </location>
    <ligand>
        <name>a divalent metal cation</name>
        <dbReference type="ChEBI" id="CHEBI:60240"/>
    </ligand>
</feature>
<feature type="binding site" evidence="1">
    <location>
        <position position="105"/>
    </location>
    <ligand>
        <name>a divalent metal cation</name>
        <dbReference type="ChEBI" id="CHEBI:60240"/>
    </ligand>
</feature>
<gene>
    <name evidence="1" type="primary">surE</name>
    <name type="ordered locus">VC0395_A0059</name>
    <name type="ordered locus">VC395_0548</name>
</gene>
<reference key="1">
    <citation type="submission" date="2007-03" db="EMBL/GenBank/DDBJ databases">
        <authorList>
            <person name="Heidelberg J."/>
        </authorList>
    </citation>
    <scope>NUCLEOTIDE SEQUENCE [LARGE SCALE GENOMIC DNA]</scope>
    <source>
        <strain>ATCC 39541 / Classical Ogawa 395 / O395</strain>
    </source>
</reference>
<reference key="2">
    <citation type="journal article" date="2008" name="PLoS ONE">
        <title>A recalibrated molecular clock and independent origins for the cholera pandemic clones.</title>
        <authorList>
            <person name="Feng L."/>
            <person name="Reeves P.R."/>
            <person name="Lan R."/>
            <person name="Ren Y."/>
            <person name="Gao C."/>
            <person name="Zhou Z."/>
            <person name="Ren Y."/>
            <person name="Cheng J."/>
            <person name="Wang W."/>
            <person name="Wang J."/>
            <person name="Qian W."/>
            <person name="Li D."/>
            <person name="Wang L."/>
        </authorList>
    </citation>
    <scope>NUCLEOTIDE SEQUENCE [LARGE SCALE GENOMIC DNA]</scope>
    <source>
        <strain>ATCC 39541 / Classical Ogawa 395 / O395</strain>
    </source>
</reference>